<reference key="1">
    <citation type="journal article" date="2007" name="PLoS Genet.">
        <title>The complete genome sequence of Yersinia pseudotuberculosis IP31758, the causative agent of Far East scarlet-like fever.</title>
        <authorList>
            <person name="Eppinger M."/>
            <person name="Rosovitz M.J."/>
            <person name="Fricke W.F."/>
            <person name="Rasko D.A."/>
            <person name="Kokorina G."/>
            <person name="Fayolle C."/>
            <person name="Lindler L.E."/>
            <person name="Carniel E."/>
            <person name="Ravel J."/>
        </authorList>
    </citation>
    <scope>NUCLEOTIDE SEQUENCE [LARGE SCALE GENOMIC DNA]</scope>
    <source>
        <strain>IP 31758</strain>
    </source>
</reference>
<comment type="function">
    <text evidence="1">Reversibly transfers an adenylyl group from ATP to 4'-phosphopantetheine, yielding dephospho-CoA (dPCoA) and pyrophosphate.</text>
</comment>
<comment type="catalytic activity">
    <reaction evidence="1">
        <text>(R)-4'-phosphopantetheine + ATP + H(+) = 3'-dephospho-CoA + diphosphate</text>
        <dbReference type="Rhea" id="RHEA:19801"/>
        <dbReference type="ChEBI" id="CHEBI:15378"/>
        <dbReference type="ChEBI" id="CHEBI:30616"/>
        <dbReference type="ChEBI" id="CHEBI:33019"/>
        <dbReference type="ChEBI" id="CHEBI:57328"/>
        <dbReference type="ChEBI" id="CHEBI:61723"/>
        <dbReference type="EC" id="2.7.7.3"/>
    </reaction>
</comment>
<comment type="cofactor">
    <cofactor evidence="1">
        <name>Mg(2+)</name>
        <dbReference type="ChEBI" id="CHEBI:18420"/>
    </cofactor>
</comment>
<comment type="pathway">
    <text evidence="1">Cofactor biosynthesis; coenzyme A biosynthesis; CoA from (R)-pantothenate: step 4/5.</text>
</comment>
<comment type="subunit">
    <text evidence="1">Homohexamer.</text>
</comment>
<comment type="subcellular location">
    <subcellularLocation>
        <location evidence="1">Cytoplasm</location>
    </subcellularLocation>
</comment>
<comment type="similarity">
    <text evidence="1">Belongs to the bacterial CoaD family.</text>
</comment>
<evidence type="ECO:0000255" key="1">
    <source>
        <dbReference type="HAMAP-Rule" id="MF_00151"/>
    </source>
</evidence>
<accession>A7FCT8</accession>
<organism>
    <name type="scientific">Yersinia pseudotuberculosis serotype O:1b (strain IP 31758)</name>
    <dbReference type="NCBI Taxonomy" id="349747"/>
    <lineage>
        <taxon>Bacteria</taxon>
        <taxon>Pseudomonadati</taxon>
        <taxon>Pseudomonadota</taxon>
        <taxon>Gammaproteobacteria</taxon>
        <taxon>Enterobacterales</taxon>
        <taxon>Yersiniaceae</taxon>
        <taxon>Yersinia</taxon>
    </lineage>
</organism>
<sequence length="159" mass="17669">MITKAIYPGTFDPITNGHLDLVTRASAMFSHVILAIADSSSKKPMFTLDERVALAKKVTAPLKNVEVLGFSELMAEFAKKHNANILVRGLRSVSDFEYEWQLANMNRHLMPKLESVFLMPSEKWSFISSSLVKEVARHGGDITPFLPKPVTKALLAKLA</sequence>
<gene>
    <name evidence="1" type="primary">coaD</name>
    <name type="ordered locus">YpsIP31758_0065</name>
</gene>
<proteinExistence type="inferred from homology"/>
<keyword id="KW-0067">ATP-binding</keyword>
<keyword id="KW-0173">Coenzyme A biosynthesis</keyword>
<keyword id="KW-0963">Cytoplasm</keyword>
<keyword id="KW-0460">Magnesium</keyword>
<keyword id="KW-0547">Nucleotide-binding</keyword>
<keyword id="KW-0548">Nucleotidyltransferase</keyword>
<keyword id="KW-0808">Transferase</keyword>
<dbReference type="EC" id="2.7.7.3" evidence="1"/>
<dbReference type="EMBL" id="CP000720">
    <property type="protein sequence ID" value="ABS48212.1"/>
    <property type="molecule type" value="Genomic_DNA"/>
</dbReference>
<dbReference type="RefSeq" id="WP_012104267.1">
    <property type="nucleotide sequence ID" value="NC_009708.1"/>
</dbReference>
<dbReference type="SMR" id="A7FCT8"/>
<dbReference type="GeneID" id="49787980"/>
<dbReference type="KEGG" id="ypi:YpsIP31758_0065"/>
<dbReference type="HOGENOM" id="CLU_100149_0_1_6"/>
<dbReference type="UniPathway" id="UPA00241">
    <property type="reaction ID" value="UER00355"/>
</dbReference>
<dbReference type="Proteomes" id="UP000002412">
    <property type="component" value="Chromosome"/>
</dbReference>
<dbReference type="GO" id="GO:0005737">
    <property type="term" value="C:cytoplasm"/>
    <property type="evidence" value="ECO:0007669"/>
    <property type="project" value="UniProtKB-SubCell"/>
</dbReference>
<dbReference type="GO" id="GO:0005524">
    <property type="term" value="F:ATP binding"/>
    <property type="evidence" value="ECO:0007669"/>
    <property type="project" value="UniProtKB-KW"/>
</dbReference>
<dbReference type="GO" id="GO:0004595">
    <property type="term" value="F:pantetheine-phosphate adenylyltransferase activity"/>
    <property type="evidence" value="ECO:0007669"/>
    <property type="project" value="UniProtKB-UniRule"/>
</dbReference>
<dbReference type="GO" id="GO:0015937">
    <property type="term" value="P:coenzyme A biosynthetic process"/>
    <property type="evidence" value="ECO:0007669"/>
    <property type="project" value="UniProtKB-UniRule"/>
</dbReference>
<dbReference type="CDD" id="cd02163">
    <property type="entry name" value="PPAT"/>
    <property type="match status" value="1"/>
</dbReference>
<dbReference type="FunFam" id="3.40.50.620:FF:000012">
    <property type="entry name" value="Phosphopantetheine adenylyltransferase"/>
    <property type="match status" value="1"/>
</dbReference>
<dbReference type="Gene3D" id="3.40.50.620">
    <property type="entry name" value="HUPs"/>
    <property type="match status" value="1"/>
</dbReference>
<dbReference type="HAMAP" id="MF_00151">
    <property type="entry name" value="PPAT_bact"/>
    <property type="match status" value="1"/>
</dbReference>
<dbReference type="InterPro" id="IPR004821">
    <property type="entry name" value="Cyt_trans-like"/>
</dbReference>
<dbReference type="InterPro" id="IPR001980">
    <property type="entry name" value="PPAT"/>
</dbReference>
<dbReference type="InterPro" id="IPR014729">
    <property type="entry name" value="Rossmann-like_a/b/a_fold"/>
</dbReference>
<dbReference type="NCBIfam" id="TIGR01510">
    <property type="entry name" value="coaD_prev_kdtB"/>
    <property type="match status" value="1"/>
</dbReference>
<dbReference type="NCBIfam" id="TIGR00125">
    <property type="entry name" value="cyt_tran_rel"/>
    <property type="match status" value="1"/>
</dbReference>
<dbReference type="PANTHER" id="PTHR21342">
    <property type="entry name" value="PHOSPHOPANTETHEINE ADENYLYLTRANSFERASE"/>
    <property type="match status" value="1"/>
</dbReference>
<dbReference type="PANTHER" id="PTHR21342:SF1">
    <property type="entry name" value="PHOSPHOPANTETHEINE ADENYLYLTRANSFERASE"/>
    <property type="match status" value="1"/>
</dbReference>
<dbReference type="Pfam" id="PF01467">
    <property type="entry name" value="CTP_transf_like"/>
    <property type="match status" value="1"/>
</dbReference>
<dbReference type="PRINTS" id="PR01020">
    <property type="entry name" value="LPSBIOSNTHSS"/>
</dbReference>
<dbReference type="SUPFAM" id="SSF52374">
    <property type="entry name" value="Nucleotidylyl transferase"/>
    <property type="match status" value="1"/>
</dbReference>
<protein>
    <recommendedName>
        <fullName evidence="1">Phosphopantetheine adenylyltransferase</fullName>
        <ecNumber evidence="1">2.7.7.3</ecNumber>
    </recommendedName>
    <alternativeName>
        <fullName evidence="1">Dephospho-CoA pyrophosphorylase</fullName>
    </alternativeName>
    <alternativeName>
        <fullName evidence="1">Pantetheine-phosphate adenylyltransferase</fullName>
        <shortName evidence="1">PPAT</shortName>
    </alternativeName>
</protein>
<name>COAD_YERP3</name>
<feature type="chain" id="PRO_1000058171" description="Phosphopantetheine adenylyltransferase">
    <location>
        <begin position="1"/>
        <end position="159"/>
    </location>
</feature>
<feature type="binding site" evidence="1">
    <location>
        <begin position="10"/>
        <end position="11"/>
    </location>
    <ligand>
        <name>ATP</name>
        <dbReference type="ChEBI" id="CHEBI:30616"/>
    </ligand>
</feature>
<feature type="binding site" evidence="1">
    <location>
        <position position="10"/>
    </location>
    <ligand>
        <name>substrate</name>
    </ligand>
</feature>
<feature type="binding site" evidence="1">
    <location>
        <position position="18"/>
    </location>
    <ligand>
        <name>ATP</name>
        <dbReference type="ChEBI" id="CHEBI:30616"/>
    </ligand>
</feature>
<feature type="binding site" evidence="1">
    <location>
        <position position="42"/>
    </location>
    <ligand>
        <name>substrate</name>
    </ligand>
</feature>
<feature type="binding site" evidence="1">
    <location>
        <position position="74"/>
    </location>
    <ligand>
        <name>substrate</name>
    </ligand>
</feature>
<feature type="binding site" evidence="1">
    <location>
        <position position="88"/>
    </location>
    <ligand>
        <name>substrate</name>
    </ligand>
</feature>
<feature type="binding site" evidence="1">
    <location>
        <begin position="89"/>
        <end position="91"/>
    </location>
    <ligand>
        <name>ATP</name>
        <dbReference type="ChEBI" id="CHEBI:30616"/>
    </ligand>
</feature>
<feature type="binding site" evidence="1">
    <location>
        <position position="99"/>
    </location>
    <ligand>
        <name>ATP</name>
        <dbReference type="ChEBI" id="CHEBI:30616"/>
    </ligand>
</feature>
<feature type="binding site" evidence="1">
    <location>
        <begin position="124"/>
        <end position="130"/>
    </location>
    <ligand>
        <name>ATP</name>
        <dbReference type="ChEBI" id="CHEBI:30616"/>
    </ligand>
</feature>
<feature type="site" description="Transition state stabilizer" evidence="1">
    <location>
        <position position="18"/>
    </location>
</feature>